<feature type="chain" id="PRO_1000043662" description="GTP cyclohydrolase 1">
    <location>
        <begin position="1"/>
        <end position="194"/>
    </location>
</feature>
<feature type="binding site" evidence="2">
    <location>
        <position position="85"/>
    </location>
    <ligand>
        <name>Zn(2+)</name>
        <dbReference type="ChEBI" id="CHEBI:29105"/>
    </ligand>
</feature>
<feature type="binding site" evidence="2">
    <location>
        <position position="88"/>
    </location>
    <ligand>
        <name>Zn(2+)</name>
        <dbReference type="ChEBI" id="CHEBI:29105"/>
    </ligand>
</feature>
<feature type="binding site" evidence="2">
    <location>
        <position position="156"/>
    </location>
    <ligand>
        <name>Zn(2+)</name>
        <dbReference type="ChEBI" id="CHEBI:29105"/>
    </ligand>
</feature>
<accession>Q64P85</accession>
<sequence length="194" mass="22404">MLEKEEIISPALEDLKNHYRSIITLLGEDAEREGLLKTPERVAKAMLTLTKGYHMDPHEVLRSAKFQEEYSQMVIVKDIDFFSLCEHHMLPFYGKAHVAYIPNGYITGLSKIARVVDIFSHRLQVQERMTLQIKECIQETLNPLGVMVVVEAKHMCMQMRGVEKQNSVTTTSDFTGAFNQAKTREEFMNLIRQR</sequence>
<gene>
    <name evidence="2" type="primary">folE</name>
    <name type="ordered locus">BF3954</name>
</gene>
<organism>
    <name type="scientific">Bacteroides fragilis (strain YCH46)</name>
    <dbReference type="NCBI Taxonomy" id="295405"/>
    <lineage>
        <taxon>Bacteria</taxon>
        <taxon>Pseudomonadati</taxon>
        <taxon>Bacteroidota</taxon>
        <taxon>Bacteroidia</taxon>
        <taxon>Bacteroidales</taxon>
        <taxon>Bacteroidaceae</taxon>
        <taxon>Bacteroides</taxon>
    </lineage>
</organism>
<protein>
    <recommendedName>
        <fullName evidence="2">GTP cyclohydrolase 1</fullName>
        <ecNumber evidence="2">3.5.4.16</ecNumber>
    </recommendedName>
    <alternativeName>
        <fullName evidence="2">GTP cyclohydrolase I</fullName>
        <shortName evidence="2">GTP-CH-I</shortName>
    </alternativeName>
</protein>
<keyword id="KW-0342">GTP-binding</keyword>
<keyword id="KW-0378">Hydrolase</keyword>
<keyword id="KW-0479">Metal-binding</keyword>
<keyword id="KW-0547">Nucleotide-binding</keyword>
<keyword id="KW-0554">One-carbon metabolism</keyword>
<keyword id="KW-0862">Zinc</keyword>
<name>GCH1_BACFR</name>
<dbReference type="EC" id="3.5.4.16" evidence="2"/>
<dbReference type="EMBL" id="AP006841">
    <property type="protein sequence ID" value="BAD50696.1"/>
    <property type="molecule type" value="Genomic_DNA"/>
</dbReference>
<dbReference type="RefSeq" id="WP_005791113.1">
    <property type="nucleotide sequence ID" value="NZ_UYXF01000028.1"/>
</dbReference>
<dbReference type="RefSeq" id="YP_101230.1">
    <property type="nucleotide sequence ID" value="NC_006347.1"/>
</dbReference>
<dbReference type="SMR" id="Q64P85"/>
<dbReference type="STRING" id="295405.BF3954"/>
<dbReference type="GeneID" id="60366296"/>
<dbReference type="KEGG" id="bfr:BF3954"/>
<dbReference type="PATRIC" id="fig|295405.11.peg.3800"/>
<dbReference type="HOGENOM" id="CLU_049768_2_0_10"/>
<dbReference type="OrthoDB" id="9801207at2"/>
<dbReference type="UniPathway" id="UPA00848">
    <property type="reaction ID" value="UER00151"/>
</dbReference>
<dbReference type="Proteomes" id="UP000002197">
    <property type="component" value="Chromosome"/>
</dbReference>
<dbReference type="GO" id="GO:0005737">
    <property type="term" value="C:cytoplasm"/>
    <property type="evidence" value="ECO:0007669"/>
    <property type="project" value="TreeGrafter"/>
</dbReference>
<dbReference type="GO" id="GO:0005525">
    <property type="term" value="F:GTP binding"/>
    <property type="evidence" value="ECO:0007669"/>
    <property type="project" value="UniProtKB-KW"/>
</dbReference>
<dbReference type="GO" id="GO:0003934">
    <property type="term" value="F:GTP cyclohydrolase I activity"/>
    <property type="evidence" value="ECO:0007669"/>
    <property type="project" value="UniProtKB-UniRule"/>
</dbReference>
<dbReference type="GO" id="GO:0008270">
    <property type="term" value="F:zinc ion binding"/>
    <property type="evidence" value="ECO:0007669"/>
    <property type="project" value="UniProtKB-UniRule"/>
</dbReference>
<dbReference type="GO" id="GO:0006730">
    <property type="term" value="P:one-carbon metabolic process"/>
    <property type="evidence" value="ECO:0007669"/>
    <property type="project" value="UniProtKB-UniRule"/>
</dbReference>
<dbReference type="GO" id="GO:0006729">
    <property type="term" value="P:tetrahydrobiopterin biosynthetic process"/>
    <property type="evidence" value="ECO:0007669"/>
    <property type="project" value="TreeGrafter"/>
</dbReference>
<dbReference type="GO" id="GO:0046654">
    <property type="term" value="P:tetrahydrofolate biosynthetic process"/>
    <property type="evidence" value="ECO:0007669"/>
    <property type="project" value="UniProtKB-UniRule"/>
</dbReference>
<dbReference type="FunFam" id="3.30.1130.10:FF:000001">
    <property type="entry name" value="GTP cyclohydrolase 1"/>
    <property type="match status" value="1"/>
</dbReference>
<dbReference type="Gene3D" id="1.10.286.10">
    <property type="match status" value="1"/>
</dbReference>
<dbReference type="Gene3D" id="3.30.1130.10">
    <property type="match status" value="1"/>
</dbReference>
<dbReference type="HAMAP" id="MF_00223">
    <property type="entry name" value="FolE"/>
    <property type="match status" value="1"/>
</dbReference>
<dbReference type="InterPro" id="IPR043133">
    <property type="entry name" value="GTP-CH-I_C/QueF"/>
</dbReference>
<dbReference type="InterPro" id="IPR043134">
    <property type="entry name" value="GTP-CH-I_N"/>
</dbReference>
<dbReference type="InterPro" id="IPR001474">
    <property type="entry name" value="GTP_CycHdrlase_I"/>
</dbReference>
<dbReference type="InterPro" id="IPR018234">
    <property type="entry name" value="GTP_CycHdrlase_I_CS"/>
</dbReference>
<dbReference type="InterPro" id="IPR020602">
    <property type="entry name" value="GTP_CycHdrlase_I_dom"/>
</dbReference>
<dbReference type="NCBIfam" id="TIGR00063">
    <property type="entry name" value="folE"/>
    <property type="match status" value="1"/>
</dbReference>
<dbReference type="NCBIfam" id="NF006825">
    <property type="entry name" value="PRK09347.1-2"/>
    <property type="match status" value="1"/>
</dbReference>
<dbReference type="NCBIfam" id="NF006826">
    <property type="entry name" value="PRK09347.1-3"/>
    <property type="match status" value="1"/>
</dbReference>
<dbReference type="PANTHER" id="PTHR11109:SF7">
    <property type="entry name" value="GTP CYCLOHYDROLASE 1"/>
    <property type="match status" value="1"/>
</dbReference>
<dbReference type="PANTHER" id="PTHR11109">
    <property type="entry name" value="GTP CYCLOHYDROLASE I"/>
    <property type="match status" value="1"/>
</dbReference>
<dbReference type="Pfam" id="PF01227">
    <property type="entry name" value="GTP_cyclohydroI"/>
    <property type="match status" value="1"/>
</dbReference>
<dbReference type="SUPFAM" id="SSF55620">
    <property type="entry name" value="Tetrahydrobiopterin biosynthesis enzymes-like"/>
    <property type="match status" value="1"/>
</dbReference>
<dbReference type="PROSITE" id="PS00859">
    <property type="entry name" value="GTP_CYCLOHYDROL_1_1"/>
    <property type="match status" value="1"/>
</dbReference>
<dbReference type="PROSITE" id="PS00860">
    <property type="entry name" value="GTP_CYCLOHYDROL_1_2"/>
    <property type="match status" value="1"/>
</dbReference>
<proteinExistence type="inferred from homology"/>
<evidence type="ECO:0000250" key="1"/>
<evidence type="ECO:0000255" key="2">
    <source>
        <dbReference type="HAMAP-Rule" id="MF_00223"/>
    </source>
</evidence>
<comment type="catalytic activity">
    <reaction evidence="2">
        <text>GTP + H2O = 7,8-dihydroneopterin 3'-triphosphate + formate + H(+)</text>
        <dbReference type="Rhea" id="RHEA:17473"/>
        <dbReference type="ChEBI" id="CHEBI:15377"/>
        <dbReference type="ChEBI" id="CHEBI:15378"/>
        <dbReference type="ChEBI" id="CHEBI:15740"/>
        <dbReference type="ChEBI" id="CHEBI:37565"/>
        <dbReference type="ChEBI" id="CHEBI:58462"/>
        <dbReference type="EC" id="3.5.4.16"/>
    </reaction>
</comment>
<comment type="pathway">
    <text evidence="2">Cofactor biosynthesis; 7,8-dihydroneopterin triphosphate biosynthesis; 7,8-dihydroneopterin triphosphate from GTP: step 1/1.</text>
</comment>
<comment type="subunit">
    <text evidence="1">Toroid-shaped homodecamer, composed of two pentamers of five dimers.</text>
</comment>
<comment type="similarity">
    <text evidence="2">Belongs to the GTP cyclohydrolase I family.</text>
</comment>
<reference key="1">
    <citation type="journal article" date="2004" name="Proc. Natl. Acad. Sci. U.S.A.">
        <title>Genomic analysis of Bacteroides fragilis reveals extensive DNA inversions regulating cell surface adaptation.</title>
        <authorList>
            <person name="Kuwahara T."/>
            <person name="Yamashita A."/>
            <person name="Hirakawa H."/>
            <person name="Nakayama H."/>
            <person name="Toh H."/>
            <person name="Okada N."/>
            <person name="Kuhara S."/>
            <person name="Hattori M."/>
            <person name="Hayashi T."/>
            <person name="Ohnishi Y."/>
        </authorList>
    </citation>
    <scope>NUCLEOTIDE SEQUENCE [LARGE SCALE GENOMIC DNA]</scope>
    <source>
        <strain>YCH46</strain>
    </source>
</reference>